<comment type="subcellular location">
    <subcellularLocation>
        <location evidence="2">Cell membrane</location>
        <topology evidence="2">Multi-pass membrane protein</topology>
    </subcellularLocation>
</comment>
<comment type="similarity">
    <text evidence="2">Belongs to the BI1 family.</text>
</comment>
<feature type="chain" id="PRO_0000179110" description="Uncharacterized protein PM0402">
    <location>
        <begin position="1"/>
        <end position="220"/>
    </location>
</feature>
<feature type="transmembrane region" description="Helical" evidence="1">
    <location>
        <begin position="25"/>
        <end position="45"/>
    </location>
</feature>
<feature type="transmembrane region" description="Helical" evidence="1">
    <location>
        <begin position="50"/>
        <end position="70"/>
    </location>
</feature>
<feature type="transmembrane region" description="Helical" evidence="1">
    <location>
        <begin position="74"/>
        <end position="94"/>
    </location>
</feature>
<feature type="transmembrane region" description="Helical" evidence="1">
    <location>
        <begin position="105"/>
        <end position="125"/>
    </location>
</feature>
<feature type="transmembrane region" description="Helical" evidence="1">
    <location>
        <begin position="135"/>
        <end position="155"/>
    </location>
</feature>
<feature type="transmembrane region" description="Helical" evidence="1">
    <location>
        <begin position="158"/>
        <end position="178"/>
    </location>
</feature>
<feature type="transmembrane region" description="Helical" evidence="1">
    <location>
        <begin position="196"/>
        <end position="216"/>
    </location>
</feature>
<accession>Q9CNM5</accession>
<sequence>MESRIVLDSRETSLLNTHKVLRNTYFLLGLTLAFSAVVAYISMSLNLPRPGLILMLAGFYGLLFLTYKLSNSGLGILSTFAFTGFLGYTLGPILNVYVSHGAGDIVVLALAGTAAVFFACSAYVLTTKKDMSFLSGTIFALFIVLLLGMVASFFFQSPMLYIAISGLFVVFSTLGILYETSNIIHGGETNYIRATVSIFVSLYNLFISLLNIFSILSNED</sequence>
<gene>
    <name type="ordered locus">PM0402</name>
</gene>
<reference key="1">
    <citation type="journal article" date="2001" name="Proc. Natl. Acad. Sci. U.S.A.">
        <title>Complete genomic sequence of Pasteurella multocida Pm70.</title>
        <authorList>
            <person name="May B.J."/>
            <person name="Zhang Q."/>
            <person name="Li L.L."/>
            <person name="Paustian M.L."/>
            <person name="Whittam T.S."/>
            <person name="Kapur V."/>
        </authorList>
    </citation>
    <scope>NUCLEOTIDE SEQUENCE [LARGE SCALE GENOMIC DNA]</scope>
    <source>
        <strain>Pm70</strain>
    </source>
</reference>
<proteinExistence type="inferred from homology"/>
<evidence type="ECO:0000255" key="1"/>
<evidence type="ECO:0000305" key="2"/>
<protein>
    <recommendedName>
        <fullName>Uncharacterized protein PM0402</fullName>
    </recommendedName>
</protein>
<organism>
    <name type="scientific">Pasteurella multocida (strain Pm70)</name>
    <dbReference type="NCBI Taxonomy" id="272843"/>
    <lineage>
        <taxon>Bacteria</taxon>
        <taxon>Pseudomonadati</taxon>
        <taxon>Pseudomonadota</taxon>
        <taxon>Gammaproteobacteria</taxon>
        <taxon>Pasteurellales</taxon>
        <taxon>Pasteurellaceae</taxon>
        <taxon>Pasteurella</taxon>
    </lineage>
</organism>
<dbReference type="EMBL" id="AE004439">
    <property type="protein sequence ID" value="AAK02486.1"/>
    <property type="molecule type" value="Genomic_DNA"/>
</dbReference>
<dbReference type="RefSeq" id="WP_005726097.1">
    <property type="nucleotide sequence ID" value="NC_002663.1"/>
</dbReference>
<dbReference type="SMR" id="Q9CNM5"/>
<dbReference type="STRING" id="272843.PM0402"/>
<dbReference type="EnsemblBacteria" id="AAK02486">
    <property type="protein sequence ID" value="AAK02486"/>
    <property type="gene ID" value="PM0402"/>
</dbReference>
<dbReference type="KEGG" id="pmu:PM0402"/>
<dbReference type="PATRIC" id="fig|272843.6.peg.415"/>
<dbReference type="HOGENOM" id="CLU_058671_2_1_6"/>
<dbReference type="OrthoDB" id="9813298at2"/>
<dbReference type="Proteomes" id="UP000000809">
    <property type="component" value="Chromosome"/>
</dbReference>
<dbReference type="GO" id="GO:0005886">
    <property type="term" value="C:plasma membrane"/>
    <property type="evidence" value="ECO:0007669"/>
    <property type="project" value="UniProtKB-SubCell"/>
</dbReference>
<dbReference type="CDD" id="cd10433">
    <property type="entry name" value="YccA_like"/>
    <property type="match status" value="1"/>
</dbReference>
<dbReference type="InterPro" id="IPR006214">
    <property type="entry name" value="Bax_inhibitor_1-related"/>
</dbReference>
<dbReference type="PANTHER" id="PTHR23291">
    <property type="entry name" value="BAX INHIBITOR-RELATED"/>
    <property type="match status" value="1"/>
</dbReference>
<dbReference type="PANTHER" id="PTHR23291:SF115">
    <property type="entry name" value="MODULATOR OF FTSH PROTEASE YCCA"/>
    <property type="match status" value="1"/>
</dbReference>
<dbReference type="Pfam" id="PF01027">
    <property type="entry name" value="Bax1-I"/>
    <property type="match status" value="1"/>
</dbReference>
<keyword id="KW-1003">Cell membrane</keyword>
<keyword id="KW-0472">Membrane</keyword>
<keyword id="KW-1185">Reference proteome</keyword>
<keyword id="KW-0812">Transmembrane</keyword>
<keyword id="KW-1133">Transmembrane helix</keyword>
<name>Y402_PASMU</name>